<dbReference type="EC" id="6.1.-.-"/>
<dbReference type="EMBL" id="Z28027">
    <property type="protein sequence ID" value="CAA81862.1"/>
    <property type="molecule type" value="Genomic_DNA"/>
</dbReference>
<dbReference type="EMBL" id="AY692691">
    <property type="protein sequence ID" value="AAT92710.1"/>
    <property type="molecule type" value="Genomic_DNA"/>
</dbReference>
<dbReference type="EMBL" id="BK006944">
    <property type="protein sequence ID" value="DAA09127.1"/>
    <property type="molecule type" value="Genomic_DNA"/>
</dbReference>
<dbReference type="PIR" id="S37844">
    <property type="entry name" value="S37844"/>
</dbReference>
<dbReference type="RefSeq" id="NP_012898.1">
    <property type="nucleotide sequence ID" value="NM_001179593.1"/>
</dbReference>
<dbReference type="SMR" id="P36101"/>
<dbReference type="BioGRID" id="34104">
    <property type="interactions" value="184"/>
</dbReference>
<dbReference type="FunCoup" id="P36101">
    <property type="interactions" value="266"/>
</dbReference>
<dbReference type="IntAct" id="P36101">
    <property type="interactions" value="16"/>
</dbReference>
<dbReference type="MINT" id="P36101"/>
<dbReference type="STRING" id="4932.YKL027W"/>
<dbReference type="iPTMnet" id="P36101"/>
<dbReference type="PaxDb" id="4932-YKL027W"/>
<dbReference type="PeptideAtlas" id="P36101"/>
<dbReference type="EnsemblFungi" id="YKL027W_mRNA">
    <property type="protein sequence ID" value="YKL027W"/>
    <property type="gene ID" value="YKL027W"/>
</dbReference>
<dbReference type="GeneID" id="853841"/>
<dbReference type="KEGG" id="sce:YKL027W"/>
<dbReference type="AGR" id="SGD:S000001510"/>
<dbReference type="SGD" id="S000001510">
    <property type="gene designation" value="TCD2"/>
</dbReference>
<dbReference type="VEuPathDB" id="FungiDB:YKL027W"/>
<dbReference type="eggNOG" id="KOG2018">
    <property type="taxonomic scope" value="Eukaryota"/>
</dbReference>
<dbReference type="GeneTree" id="ENSGT00940000176473"/>
<dbReference type="HOGENOM" id="CLU_013325_9_3_1"/>
<dbReference type="InParanoid" id="P36101"/>
<dbReference type="OMA" id="GSWVVTM"/>
<dbReference type="OrthoDB" id="10265862at2759"/>
<dbReference type="BioCyc" id="YEAST:G3O-31833-MONOMER"/>
<dbReference type="BioGRID-ORCS" id="853841">
    <property type="hits" value="0 hits in 10 CRISPR screens"/>
</dbReference>
<dbReference type="PRO" id="PR:P36101"/>
<dbReference type="Proteomes" id="UP000002311">
    <property type="component" value="Chromosome XI"/>
</dbReference>
<dbReference type="RNAct" id="P36101">
    <property type="molecule type" value="protein"/>
</dbReference>
<dbReference type="GO" id="GO:0005741">
    <property type="term" value="C:mitochondrial outer membrane"/>
    <property type="evidence" value="ECO:0007005"/>
    <property type="project" value="SGD"/>
</dbReference>
<dbReference type="GO" id="GO:0005739">
    <property type="term" value="C:mitochondrion"/>
    <property type="evidence" value="ECO:0007005"/>
    <property type="project" value="SGD"/>
</dbReference>
<dbReference type="GO" id="GO:0005524">
    <property type="term" value="F:ATP binding"/>
    <property type="evidence" value="ECO:0007669"/>
    <property type="project" value="UniProtKB-KW"/>
</dbReference>
<dbReference type="GO" id="GO:0061503">
    <property type="term" value="F:tRNA threonylcarbamoyladenosine dehydratase"/>
    <property type="evidence" value="ECO:0000315"/>
    <property type="project" value="SGD"/>
</dbReference>
<dbReference type="GO" id="GO:0008641">
    <property type="term" value="F:ubiquitin-like modifier activating enzyme activity"/>
    <property type="evidence" value="ECO:0007669"/>
    <property type="project" value="InterPro"/>
</dbReference>
<dbReference type="GO" id="GO:0061504">
    <property type="term" value="P:cyclic threonylcarbamoyladenosine biosynthetic process"/>
    <property type="evidence" value="ECO:0000315"/>
    <property type="project" value="SGD"/>
</dbReference>
<dbReference type="CDD" id="cd00755">
    <property type="entry name" value="YgdL_like"/>
    <property type="match status" value="1"/>
</dbReference>
<dbReference type="FunFam" id="3.40.50.720:FF:000125">
    <property type="entry name" value="tRNA threonylcarbamoyladenosine dehydratase 2-like"/>
    <property type="match status" value="1"/>
</dbReference>
<dbReference type="Gene3D" id="3.40.50.720">
    <property type="entry name" value="NAD(P)-binding Rossmann-like Domain"/>
    <property type="match status" value="1"/>
</dbReference>
<dbReference type="InterPro" id="IPR045886">
    <property type="entry name" value="ThiF/MoeB/HesA"/>
</dbReference>
<dbReference type="InterPro" id="IPR000594">
    <property type="entry name" value="ThiF_NAD_FAD-bd"/>
</dbReference>
<dbReference type="InterPro" id="IPR035985">
    <property type="entry name" value="Ubiquitin-activating_enz"/>
</dbReference>
<dbReference type="PANTHER" id="PTHR43267">
    <property type="entry name" value="TRNA THREONYLCARBAMOYLADENOSINE DEHYDRATASE"/>
    <property type="match status" value="1"/>
</dbReference>
<dbReference type="PANTHER" id="PTHR43267:SF2">
    <property type="entry name" value="TRNA THREONYLCARBAMOYLADENOSINE DEHYDRATASE 1-RELATED"/>
    <property type="match status" value="1"/>
</dbReference>
<dbReference type="Pfam" id="PF00899">
    <property type="entry name" value="ThiF"/>
    <property type="match status" value="1"/>
</dbReference>
<dbReference type="SUPFAM" id="SSF69572">
    <property type="entry name" value="Activating enzymes of the ubiquitin-like proteins"/>
    <property type="match status" value="1"/>
</dbReference>
<sequence length="447" mass="50266">MVEKDTWKLITATALFTVAVTTITDYAWTSWQAQKQVIAQQKNKNKGGQTKSDTDKYHQYDEQFIRQSLKNNVEFLGEDTIEKLSNQYVVVVGAGGVGSWVVNSLVRSGCRKIRVVDFDQVSLSSLNRHSCAILNDVGTPKVECLRRHMREIAPWCEIDPINELWTLQNGERLTLGNGTPDFIVDCIDNIDTKVDLLEFAYNHGIKVISSMGASAKSDPTKLNVGDLATTEEDPLARVVRRKLKKRGILSGIPVVFSAEKPDPKKAKLLPLPDEEYERGKVDELSALKDFRVRILPVLGTMPSLFGLTITTWILSNISDKPLEPVEGKNRIKVYDGIYQSLAGQMSRVGIPSQRIPLALKDVSYLVEEVFKGKSPISGISTRLTLTKWDPSKPISLQNVVVLTKNEQKVHEDRVLKGKESLQDVYDAKVLKLVSQRFREEAYYSQFR</sequence>
<feature type="chain" id="PRO_0000120586" description="tRNA threonylcarbamoyladenosine dehydratase 2">
    <location>
        <begin position="1"/>
        <end position="447"/>
    </location>
</feature>
<feature type="transmembrane region" description="Helical; Name=1" evidence="1">
    <location>
        <begin position="9"/>
        <end position="29"/>
    </location>
</feature>
<feature type="transmembrane region" description="Helical; Name=2" evidence="1">
    <location>
        <begin position="86"/>
        <end position="106"/>
    </location>
</feature>
<feature type="transmembrane region" description="Helical; Name=3" evidence="1">
    <location>
        <begin position="294"/>
        <end position="314"/>
    </location>
</feature>
<feature type="sequence conflict" description="In Ref. 3; AAT92710." evidence="4" ref="3">
    <original>Q</original>
    <variation>P</variation>
    <location>
        <position position="41"/>
    </location>
</feature>
<name>TCD2_YEAST</name>
<comment type="function">
    <text evidence="3">Catalyzes the ATP-dependent dehydration of threonylcarbamoyladenosine at position 37 (t(6)A37) to form cyclic t(6)A37 (ct(6)A37) in tRNAs that read codons beginning with adenine.</text>
</comment>
<comment type="interaction">
    <interactant intactId="EBI-26618">
        <id>P36101</id>
    </interactant>
    <interactant intactId="EBI-24431">
        <id>P38756</id>
        <label>TCD1</label>
    </interactant>
    <organismsDiffer>false</organismsDiffer>
    <experiments>3</experiments>
</comment>
<comment type="subcellular location">
    <subcellularLocation>
        <location evidence="4">Mitochondrion outer membrane</location>
        <topology evidence="4">Multi-pass membrane protein</topology>
    </subcellularLocation>
</comment>
<comment type="disruption phenotype">
    <text evidence="3">Displays only the t(6)A but not the ct(6)A modification in tRNAs. Unable to sustain respiratory growth under non-fermenting conditions.</text>
</comment>
<comment type="miscellaneous">
    <text evidence="2">Present with 1170 molecules/cell in log phase SD medium.</text>
</comment>
<comment type="miscellaneous">
    <text evidence="5">ct(6)A is involved in promoting decoding efficiency. It is an unstable modification that can be easily hydrolyzed and converted to t(6)A during nucleoside preparation by conventional methods (PubMed:23242255).</text>
</comment>
<comment type="similarity">
    <text evidence="4">Belongs to the HesA/MoeB/ThiF family.</text>
</comment>
<reference key="1">
    <citation type="journal article" date="1994" name="Nature">
        <title>Complete DNA sequence of yeast chromosome XI.</title>
        <authorList>
            <person name="Dujon B."/>
            <person name="Alexandraki D."/>
            <person name="Andre B."/>
            <person name="Ansorge W."/>
            <person name="Baladron V."/>
            <person name="Ballesta J.P.G."/>
            <person name="Banrevi A."/>
            <person name="Bolle P.-A."/>
            <person name="Bolotin-Fukuhara M."/>
            <person name="Bossier P."/>
            <person name="Bou G."/>
            <person name="Boyer J."/>
            <person name="Buitrago M.J."/>
            <person name="Cheret G."/>
            <person name="Colleaux L."/>
            <person name="Daignan-Fornier B."/>
            <person name="del Rey F."/>
            <person name="Dion C."/>
            <person name="Domdey H."/>
            <person name="Duesterhoeft A."/>
            <person name="Duesterhus S."/>
            <person name="Entian K.-D."/>
            <person name="Erfle H."/>
            <person name="Esteban P.F."/>
            <person name="Feldmann H."/>
            <person name="Fernandes L."/>
            <person name="Fobo G.M."/>
            <person name="Fritz C."/>
            <person name="Fukuhara H."/>
            <person name="Gabel C."/>
            <person name="Gaillon L."/>
            <person name="Garcia-Cantalejo J.M."/>
            <person name="Garcia-Ramirez J.J."/>
            <person name="Gent M.E."/>
            <person name="Ghazvini M."/>
            <person name="Goffeau A."/>
            <person name="Gonzalez A."/>
            <person name="Grothues D."/>
            <person name="Guerreiro P."/>
            <person name="Hegemann J.H."/>
            <person name="Hewitt N."/>
            <person name="Hilger F."/>
            <person name="Hollenberg C.P."/>
            <person name="Horaitis O."/>
            <person name="Indge K.J."/>
            <person name="Jacquier A."/>
            <person name="James C.M."/>
            <person name="Jauniaux J.-C."/>
            <person name="Jimenez A."/>
            <person name="Keuchel H."/>
            <person name="Kirchrath L."/>
            <person name="Kleine K."/>
            <person name="Koetter P."/>
            <person name="Legrain P."/>
            <person name="Liebl S."/>
            <person name="Louis E.J."/>
            <person name="Maia e Silva A."/>
            <person name="Marck C."/>
            <person name="Monnier A.-L."/>
            <person name="Moestl D."/>
            <person name="Mueller S."/>
            <person name="Obermaier B."/>
            <person name="Oliver S.G."/>
            <person name="Pallier C."/>
            <person name="Pascolo S."/>
            <person name="Pfeiffer F."/>
            <person name="Philippsen P."/>
            <person name="Planta R.J."/>
            <person name="Pohl F.M."/>
            <person name="Pohl T.M."/>
            <person name="Poehlmann R."/>
            <person name="Portetelle D."/>
            <person name="Purnelle B."/>
            <person name="Puzos V."/>
            <person name="Ramezani Rad M."/>
            <person name="Rasmussen S.W."/>
            <person name="Remacha M.A."/>
            <person name="Revuelta J.L."/>
            <person name="Richard G.-F."/>
            <person name="Rieger M."/>
            <person name="Rodrigues-Pousada C."/>
            <person name="Rose M."/>
            <person name="Rupp T."/>
            <person name="Santos M.A."/>
            <person name="Schwager C."/>
            <person name="Sensen C."/>
            <person name="Skala J."/>
            <person name="Soares H."/>
            <person name="Sor F."/>
            <person name="Stegemann J."/>
            <person name="Tettelin H."/>
            <person name="Thierry A."/>
            <person name="Tzermia M."/>
            <person name="Urrestarazu L.A."/>
            <person name="van Dyck L."/>
            <person name="van Vliet-Reedijk J.C."/>
            <person name="Valens M."/>
            <person name="Vandenbol M."/>
            <person name="Vilela C."/>
            <person name="Vissers S."/>
            <person name="von Wettstein D."/>
            <person name="Voss H."/>
            <person name="Wiemann S."/>
            <person name="Xu G."/>
            <person name="Zimmermann J."/>
            <person name="Haasemann M."/>
            <person name="Becker I."/>
            <person name="Mewes H.-W."/>
        </authorList>
    </citation>
    <scope>NUCLEOTIDE SEQUENCE [LARGE SCALE GENOMIC DNA]</scope>
    <source>
        <strain>ATCC 204508 / S288c</strain>
    </source>
</reference>
<reference key="2">
    <citation type="journal article" date="2014" name="G3 (Bethesda)">
        <title>The reference genome sequence of Saccharomyces cerevisiae: Then and now.</title>
        <authorList>
            <person name="Engel S.R."/>
            <person name="Dietrich F.S."/>
            <person name="Fisk D.G."/>
            <person name="Binkley G."/>
            <person name="Balakrishnan R."/>
            <person name="Costanzo M.C."/>
            <person name="Dwight S.S."/>
            <person name="Hitz B.C."/>
            <person name="Karra K."/>
            <person name="Nash R.S."/>
            <person name="Weng S."/>
            <person name="Wong E.D."/>
            <person name="Lloyd P."/>
            <person name="Skrzypek M.S."/>
            <person name="Miyasato S.R."/>
            <person name="Simison M."/>
            <person name="Cherry J.M."/>
        </authorList>
    </citation>
    <scope>GENOME REANNOTATION</scope>
    <source>
        <strain>ATCC 204508 / S288c</strain>
    </source>
</reference>
<reference key="3">
    <citation type="journal article" date="2007" name="Genome Res.">
        <title>Approaching a complete repository of sequence-verified protein-encoding clones for Saccharomyces cerevisiae.</title>
        <authorList>
            <person name="Hu Y."/>
            <person name="Rolfs A."/>
            <person name="Bhullar B."/>
            <person name="Murthy T.V.S."/>
            <person name="Zhu C."/>
            <person name="Berger M.F."/>
            <person name="Camargo A.A."/>
            <person name="Kelley F."/>
            <person name="McCarron S."/>
            <person name="Jepson D."/>
            <person name="Richardson A."/>
            <person name="Raphael J."/>
            <person name="Moreira D."/>
            <person name="Taycher E."/>
            <person name="Zuo D."/>
            <person name="Mohr S."/>
            <person name="Kane M.F."/>
            <person name="Williamson J."/>
            <person name="Simpson A.J.G."/>
            <person name="Bulyk M.L."/>
            <person name="Harlow E."/>
            <person name="Marsischky G."/>
            <person name="Kolodner R.D."/>
            <person name="LaBaer J."/>
        </authorList>
    </citation>
    <scope>NUCLEOTIDE SEQUENCE [GENOMIC DNA]</scope>
    <source>
        <strain>ATCC 204508 / S288c</strain>
    </source>
</reference>
<reference key="4">
    <citation type="journal article" date="2003" name="Nature">
        <title>Global analysis of protein expression in yeast.</title>
        <authorList>
            <person name="Ghaemmaghami S."/>
            <person name="Huh W.-K."/>
            <person name="Bower K."/>
            <person name="Howson R.W."/>
            <person name="Belle A."/>
            <person name="Dephoure N."/>
            <person name="O'Shea E.K."/>
            <person name="Weissman J.S."/>
        </authorList>
    </citation>
    <scope>LEVEL OF PROTEIN EXPRESSION [LARGE SCALE ANALYSIS]</scope>
</reference>
<reference key="5">
    <citation type="journal article" date="2003" name="Proc. Natl. Acad. Sci. U.S.A.">
        <title>The proteome of Saccharomyces cerevisiae mitochondria.</title>
        <authorList>
            <person name="Sickmann A."/>
            <person name="Reinders J."/>
            <person name="Wagner Y."/>
            <person name="Joppich C."/>
            <person name="Zahedi R.P."/>
            <person name="Meyer H.E."/>
            <person name="Schoenfisch B."/>
            <person name="Perschil I."/>
            <person name="Chacinska A."/>
            <person name="Guiard B."/>
            <person name="Rehling P."/>
            <person name="Pfanner N."/>
            <person name="Meisinger C."/>
        </authorList>
    </citation>
    <scope>SUBCELLULAR LOCATION [LARGE SCALE ANALYSIS]</scope>
    <source>
        <strain>ATCC 76625 / YPH499</strain>
    </source>
</reference>
<reference key="6">
    <citation type="journal article" date="2006" name="Mol. Biol. Cell">
        <title>Proteomic analysis of the yeast mitochondrial outer membrane reveals accumulation of a subclass of preproteins.</title>
        <authorList>
            <person name="Zahedi R.P."/>
            <person name="Sickmann A."/>
            <person name="Boehm A.M."/>
            <person name="Winkler C."/>
            <person name="Zufall N."/>
            <person name="Schoenfisch B."/>
            <person name="Guiard B."/>
            <person name="Pfanner N."/>
            <person name="Meisinger C."/>
        </authorList>
    </citation>
    <scope>SUBCELLULAR LOCATION</scope>
    <scope>IDENTIFICATION BY MASS SPECTROMETRY</scope>
</reference>
<reference key="7">
    <citation type="journal article" date="2007" name="J. Proteome Res.">
        <title>Large-scale phosphorylation analysis of alpha-factor-arrested Saccharomyces cerevisiae.</title>
        <authorList>
            <person name="Li X."/>
            <person name="Gerber S.A."/>
            <person name="Rudner A.D."/>
            <person name="Beausoleil S.A."/>
            <person name="Haas W."/>
            <person name="Villen J."/>
            <person name="Elias J.E."/>
            <person name="Gygi S.P."/>
        </authorList>
    </citation>
    <scope>IDENTIFICATION BY MASS SPECTROMETRY [LARGE SCALE ANALYSIS]</scope>
    <source>
        <strain>ADR376</strain>
    </source>
</reference>
<reference key="8">
    <citation type="journal article" date="2013" name="Nat. Chem. Biol.">
        <title>A cyclic form of N6-threonylcarbamoyladenosine as a widely distributed tRNA hypermodification.</title>
        <authorList>
            <person name="Miyauchi K."/>
            <person name="Kimura S."/>
            <person name="Suzuki T."/>
        </authorList>
    </citation>
    <scope>FUNCTION</scope>
    <scope>DISRUPTION PHENOTYPE</scope>
</reference>
<accession>P36101</accession>
<accession>D6VXQ7</accession>
<accession>Q6B2N9</accession>
<protein>
    <recommendedName>
        <fullName>tRNA threonylcarbamoyladenosine dehydratase 2</fullName>
        <ecNumber>6.1.-.-</ecNumber>
    </recommendedName>
    <alternativeName>
        <fullName>t(6)A37 dehydratase 2</fullName>
    </alternativeName>
</protein>
<proteinExistence type="evidence at protein level"/>
<evidence type="ECO:0000255" key="1"/>
<evidence type="ECO:0000269" key="2">
    <source>
    </source>
</evidence>
<evidence type="ECO:0000269" key="3">
    <source>
    </source>
</evidence>
<evidence type="ECO:0000305" key="4"/>
<evidence type="ECO:0000305" key="5">
    <source>
    </source>
</evidence>
<organism>
    <name type="scientific">Saccharomyces cerevisiae (strain ATCC 204508 / S288c)</name>
    <name type="common">Baker's yeast</name>
    <dbReference type="NCBI Taxonomy" id="559292"/>
    <lineage>
        <taxon>Eukaryota</taxon>
        <taxon>Fungi</taxon>
        <taxon>Dikarya</taxon>
        <taxon>Ascomycota</taxon>
        <taxon>Saccharomycotina</taxon>
        <taxon>Saccharomycetes</taxon>
        <taxon>Saccharomycetales</taxon>
        <taxon>Saccharomycetaceae</taxon>
        <taxon>Saccharomyces</taxon>
    </lineage>
</organism>
<keyword id="KW-0067">ATP-binding</keyword>
<keyword id="KW-0436">Ligase</keyword>
<keyword id="KW-0472">Membrane</keyword>
<keyword id="KW-0496">Mitochondrion</keyword>
<keyword id="KW-1000">Mitochondrion outer membrane</keyword>
<keyword id="KW-0547">Nucleotide-binding</keyword>
<keyword id="KW-1185">Reference proteome</keyword>
<keyword id="KW-0812">Transmembrane</keyword>
<keyword id="KW-1133">Transmembrane helix</keyword>
<gene>
    <name type="primary">TCD2</name>
    <name type="ordered locus">YKL027W</name>
</gene>